<protein>
    <recommendedName>
        <fullName evidence="1">Elongation factor G</fullName>
        <shortName evidence="1">EF-G</shortName>
    </recommendedName>
</protein>
<keyword id="KW-0963">Cytoplasm</keyword>
<keyword id="KW-0251">Elongation factor</keyword>
<keyword id="KW-0342">GTP-binding</keyword>
<keyword id="KW-0547">Nucleotide-binding</keyword>
<keyword id="KW-0648">Protein biosynthesis</keyword>
<keyword id="KW-1185">Reference proteome</keyword>
<feature type="chain" id="PRO_0000225222" description="Elongation factor G">
    <location>
        <begin position="1"/>
        <end position="697"/>
    </location>
</feature>
<feature type="domain" description="tr-type G">
    <location>
        <begin position="8"/>
        <end position="290"/>
    </location>
</feature>
<feature type="binding site" evidence="1">
    <location>
        <begin position="17"/>
        <end position="24"/>
    </location>
    <ligand>
        <name>GTP</name>
        <dbReference type="ChEBI" id="CHEBI:37565"/>
    </ligand>
</feature>
<feature type="binding site" evidence="1">
    <location>
        <begin position="88"/>
        <end position="92"/>
    </location>
    <ligand>
        <name>GTP</name>
        <dbReference type="ChEBI" id="CHEBI:37565"/>
    </ligand>
</feature>
<feature type="binding site" evidence="1">
    <location>
        <begin position="142"/>
        <end position="145"/>
    </location>
    <ligand>
        <name>GTP</name>
        <dbReference type="ChEBI" id="CHEBI:37565"/>
    </ligand>
</feature>
<gene>
    <name evidence="1" type="primary">fusA</name>
    <name type="ordered locus">Noc_2327</name>
</gene>
<evidence type="ECO:0000255" key="1">
    <source>
        <dbReference type="HAMAP-Rule" id="MF_00054"/>
    </source>
</evidence>
<organism>
    <name type="scientific">Nitrosococcus oceani (strain ATCC 19707 / BCRC 17464 / JCM 30415 / NCIMB 11848 / C-107)</name>
    <dbReference type="NCBI Taxonomy" id="323261"/>
    <lineage>
        <taxon>Bacteria</taxon>
        <taxon>Pseudomonadati</taxon>
        <taxon>Pseudomonadota</taxon>
        <taxon>Gammaproteobacteria</taxon>
        <taxon>Chromatiales</taxon>
        <taxon>Chromatiaceae</taxon>
        <taxon>Nitrosococcus</taxon>
    </lineage>
</organism>
<dbReference type="EMBL" id="CP000127">
    <property type="protein sequence ID" value="ABA58785.1"/>
    <property type="molecule type" value="Genomic_DNA"/>
</dbReference>
<dbReference type="RefSeq" id="WP_002811545.1">
    <property type="nucleotide sequence ID" value="NC_007484.1"/>
</dbReference>
<dbReference type="SMR" id="Q3J8R1"/>
<dbReference type="FunCoup" id="Q3J8R1">
    <property type="interactions" value="601"/>
</dbReference>
<dbReference type="STRING" id="323261.Noc_2327"/>
<dbReference type="KEGG" id="noc:Noc_2327"/>
<dbReference type="eggNOG" id="COG0480">
    <property type="taxonomic scope" value="Bacteria"/>
</dbReference>
<dbReference type="HOGENOM" id="CLU_002794_4_1_6"/>
<dbReference type="InParanoid" id="Q3J8R1"/>
<dbReference type="Proteomes" id="UP000006838">
    <property type="component" value="Chromosome"/>
</dbReference>
<dbReference type="GO" id="GO:0005737">
    <property type="term" value="C:cytoplasm"/>
    <property type="evidence" value="ECO:0007669"/>
    <property type="project" value="UniProtKB-SubCell"/>
</dbReference>
<dbReference type="GO" id="GO:0005525">
    <property type="term" value="F:GTP binding"/>
    <property type="evidence" value="ECO:0007669"/>
    <property type="project" value="UniProtKB-UniRule"/>
</dbReference>
<dbReference type="GO" id="GO:0003924">
    <property type="term" value="F:GTPase activity"/>
    <property type="evidence" value="ECO:0007669"/>
    <property type="project" value="InterPro"/>
</dbReference>
<dbReference type="GO" id="GO:0097216">
    <property type="term" value="F:guanosine tetraphosphate binding"/>
    <property type="evidence" value="ECO:0007669"/>
    <property type="project" value="UniProtKB-ARBA"/>
</dbReference>
<dbReference type="GO" id="GO:0003746">
    <property type="term" value="F:translation elongation factor activity"/>
    <property type="evidence" value="ECO:0007669"/>
    <property type="project" value="UniProtKB-UniRule"/>
</dbReference>
<dbReference type="GO" id="GO:0032790">
    <property type="term" value="P:ribosome disassembly"/>
    <property type="evidence" value="ECO:0007669"/>
    <property type="project" value="TreeGrafter"/>
</dbReference>
<dbReference type="CDD" id="cd01886">
    <property type="entry name" value="EF-G"/>
    <property type="match status" value="1"/>
</dbReference>
<dbReference type="CDD" id="cd16262">
    <property type="entry name" value="EFG_III"/>
    <property type="match status" value="1"/>
</dbReference>
<dbReference type="CDD" id="cd01434">
    <property type="entry name" value="EFG_mtEFG1_IV"/>
    <property type="match status" value="1"/>
</dbReference>
<dbReference type="CDD" id="cd03713">
    <property type="entry name" value="EFG_mtEFG_C"/>
    <property type="match status" value="1"/>
</dbReference>
<dbReference type="CDD" id="cd04088">
    <property type="entry name" value="EFG_mtEFG_II"/>
    <property type="match status" value="1"/>
</dbReference>
<dbReference type="FunFam" id="2.40.30.10:FF:000006">
    <property type="entry name" value="Elongation factor G"/>
    <property type="match status" value="1"/>
</dbReference>
<dbReference type="FunFam" id="3.30.230.10:FF:000003">
    <property type="entry name" value="Elongation factor G"/>
    <property type="match status" value="1"/>
</dbReference>
<dbReference type="FunFam" id="3.30.70.240:FF:000001">
    <property type="entry name" value="Elongation factor G"/>
    <property type="match status" value="1"/>
</dbReference>
<dbReference type="FunFam" id="3.30.70.870:FF:000001">
    <property type="entry name" value="Elongation factor G"/>
    <property type="match status" value="1"/>
</dbReference>
<dbReference type="FunFam" id="3.40.50.300:FF:000029">
    <property type="entry name" value="Elongation factor G"/>
    <property type="match status" value="1"/>
</dbReference>
<dbReference type="Gene3D" id="3.30.230.10">
    <property type="match status" value="1"/>
</dbReference>
<dbReference type="Gene3D" id="3.30.70.240">
    <property type="match status" value="1"/>
</dbReference>
<dbReference type="Gene3D" id="3.30.70.870">
    <property type="entry name" value="Elongation Factor G (Translational Gtpase), domain 3"/>
    <property type="match status" value="1"/>
</dbReference>
<dbReference type="Gene3D" id="3.40.50.300">
    <property type="entry name" value="P-loop containing nucleotide triphosphate hydrolases"/>
    <property type="match status" value="1"/>
</dbReference>
<dbReference type="Gene3D" id="2.40.30.10">
    <property type="entry name" value="Translation factors"/>
    <property type="match status" value="1"/>
</dbReference>
<dbReference type="HAMAP" id="MF_00054_B">
    <property type="entry name" value="EF_G_EF_2_B"/>
    <property type="match status" value="1"/>
</dbReference>
<dbReference type="InterPro" id="IPR041095">
    <property type="entry name" value="EFG_II"/>
</dbReference>
<dbReference type="InterPro" id="IPR009022">
    <property type="entry name" value="EFG_III"/>
</dbReference>
<dbReference type="InterPro" id="IPR035647">
    <property type="entry name" value="EFG_III/V"/>
</dbReference>
<dbReference type="InterPro" id="IPR047872">
    <property type="entry name" value="EFG_IV"/>
</dbReference>
<dbReference type="InterPro" id="IPR035649">
    <property type="entry name" value="EFG_V"/>
</dbReference>
<dbReference type="InterPro" id="IPR000640">
    <property type="entry name" value="EFG_V-like"/>
</dbReference>
<dbReference type="InterPro" id="IPR004161">
    <property type="entry name" value="EFTu-like_2"/>
</dbReference>
<dbReference type="InterPro" id="IPR031157">
    <property type="entry name" value="G_TR_CS"/>
</dbReference>
<dbReference type="InterPro" id="IPR027417">
    <property type="entry name" value="P-loop_NTPase"/>
</dbReference>
<dbReference type="InterPro" id="IPR020568">
    <property type="entry name" value="Ribosomal_Su5_D2-typ_SF"/>
</dbReference>
<dbReference type="InterPro" id="IPR014721">
    <property type="entry name" value="Ribsml_uS5_D2-typ_fold_subgr"/>
</dbReference>
<dbReference type="InterPro" id="IPR005225">
    <property type="entry name" value="Small_GTP-bd"/>
</dbReference>
<dbReference type="InterPro" id="IPR000795">
    <property type="entry name" value="T_Tr_GTP-bd_dom"/>
</dbReference>
<dbReference type="InterPro" id="IPR009000">
    <property type="entry name" value="Transl_B-barrel_sf"/>
</dbReference>
<dbReference type="InterPro" id="IPR004540">
    <property type="entry name" value="Transl_elong_EFG/EF2"/>
</dbReference>
<dbReference type="InterPro" id="IPR005517">
    <property type="entry name" value="Transl_elong_EFG/EF2_IV"/>
</dbReference>
<dbReference type="NCBIfam" id="TIGR00484">
    <property type="entry name" value="EF-G"/>
    <property type="match status" value="1"/>
</dbReference>
<dbReference type="NCBIfam" id="NF009379">
    <property type="entry name" value="PRK12740.1-3"/>
    <property type="match status" value="1"/>
</dbReference>
<dbReference type="NCBIfam" id="NF009381">
    <property type="entry name" value="PRK12740.1-5"/>
    <property type="match status" value="1"/>
</dbReference>
<dbReference type="NCBIfam" id="NF009891">
    <property type="entry name" value="PRK13351.1-1"/>
    <property type="match status" value="1"/>
</dbReference>
<dbReference type="NCBIfam" id="TIGR00231">
    <property type="entry name" value="small_GTP"/>
    <property type="match status" value="1"/>
</dbReference>
<dbReference type="PANTHER" id="PTHR43261:SF1">
    <property type="entry name" value="RIBOSOME-RELEASING FACTOR 2, MITOCHONDRIAL"/>
    <property type="match status" value="1"/>
</dbReference>
<dbReference type="PANTHER" id="PTHR43261">
    <property type="entry name" value="TRANSLATION ELONGATION FACTOR G-RELATED"/>
    <property type="match status" value="1"/>
</dbReference>
<dbReference type="Pfam" id="PF00679">
    <property type="entry name" value="EFG_C"/>
    <property type="match status" value="1"/>
</dbReference>
<dbReference type="Pfam" id="PF14492">
    <property type="entry name" value="EFG_III"/>
    <property type="match status" value="1"/>
</dbReference>
<dbReference type="Pfam" id="PF03764">
    <property type="entry name" value="EFG_IV"/>
    <property type="match status" value="1"/>
</dbReference>
<dbReference type="Pfam" id="PF00009">
    <property type="entry name" value="GTP_EFTU"/>
    <property type="match status" value="1"/>
</dbReference>
<dbReference type="Pfam" id="PF03144">
    <property type="entry name" value="GTP_EFTU_D2"/>
    <property type="match status" value="1"/>
</dbReference>
<dbReference type="PRINTS" id="PR00315">
    <property type="entry name" value="ELONGATNFCT"/>
</dbReference>
<dbReference type="SMART" id="SM00838">
    <property type="entry name" value="EFG_C"/>
    <property type="match status" value="1"/>
</dbReference>
<dbReference type="SMART" id="SM00889">
    <property type="entry name" value="EFG_IV"/>
    <property type="match status" value="1"/>
</dbReference>
<dbReference type="SUPFAM" id="SSF54980">
    <property type="entry name" value="EF-G C-terminal domain-like"/>
    <property type="match status" value="2"/>
</dbReference>
<dbReference type="SUPFAM" id="SSF52540">
    <property type="entry name" value="P-loop containing nucleoside triphosphate hydrolases"/>
    <property type="match status" value="1"/>
</dbReference>
<dbReference type="SUPFAM" id="SSF54211">
    <property type="entry name" value="Ribosomal protein S5 domain 2-like"/>
    <property type="match status" value="1"/>
</dbReference>
<dbReference type="SUPFAM" id="SSF50447">
    <property type="entry name" value="Translation proteins"/>
    <property type="match status" value="1"/>
</dbReference>
<dbReference type="PROSITE" id="PS00301">
    <property type="entry name" value="G_TR_1"/>
    <property type="match status" value="1"/>
</dbReference>
<dbReference type="PROSITE" id="PS51722">
    <property type="entry name" value="G_TR_2"/>
    <property type="match status" value="1"/>
</dbReference>
<comment type="function">
    <text evidence="1">Catalyzes the GTP-dependent ribosomal translocation step during translation elongation. During this step, the ribosome changes from the pre-translocational (PRE) to the post-translocational (POST) state as the newly formed A-site-bound peptidyl-tRNA and P-site-bound deacylated tRNA move to the P and E sites, respectively. Catalyzes the coordinated movement of the two tRNA molecules, the mRNA and conformational changes in the ribosome.</text>
</comment>
<comment type="subcellular location">
    <subcellularLocation>
        <location evidence="1">Cytoplasm</location>
    </subcellularLocation>
</comment>
<comment type="similarity">
    <text evidence="1">Belongs to the TRAFAC class translation factor GTPase superfamily. Classic translation factor GTPase family. EF-G/EF-2 subfamily.</text>
</comment>
<name>EFG_NITOC</name>
<reference key="1">
    <citation type="journal article" date="2006" name="Appl. Environ. Microbiol.">
        <title>Complete genome sequence of the marine, chemolithoautotrophic, ammonia-oxidizing bacterium Nitrosococcus oceani ATCC 19707.</title>
        <authorList>
            <person name="Klotz M.G."/>
            <person name="Arp D.J."/>
            <person name="Chain P.S.G."/>
            <person name="El-Sheikh A.F."/>
            <person name="Hauser L.J."/>
            <person name="Hommes N.G."/>
            <person name="Larimer F.W."/>
            <person name="Malfatti S.A."/>
            <person name="Norton J.M."/>
            <person name="Poret-Peterson A.T."/>
            <person name="Vergez L.M."/>
            <person name="Ward B.B."/>
        </authorList>
    </citation>
    <scope>NUCLEOTIDE SEQUENCE [LARGE SCALE GENOMIC DNA]</scope>
    <source>
        <strain>ATCC 19707 / BCRC 17464 / JCM 30415 / NCIMB 11848 / C-107</strain>
    </source>
</reference>
<proteinExistence type="inferred from homology"/>
<accession>Q3J8R1</accession>
<sequence>MARKTPIERYRNIGIMAHIDAGKTTTTERILYYTGVSHKLGEVHDGAATMDWMEQEQERGITITSAATTCFWSGMARQFPEHRINIIDTPGHVDFTIEVERSLRVLDGAVAVFCAVGGVEPQSETVWRQANKYKVPRLAFVNKMDRQGADFLRVVGQIRSRLGANPIPIQIPIGAEENFEGVVDLIKMKAIHWDKSSMGMAFEEKEIPGNLQASCDEYREKMIEAAAEASEELMERYLEEGQLPLDDIVKGLRIRTLNGEIVPALCGSAFKNKGVQAMLDAVLSYMPSPVEVPPIKGVQKDETEGERHASDEEPFAALAFKIASDPYVGNLTFFRVYSGVLSSGDTVYNAASGNRERIGRLLQMHSNSREEIKDVMAGDIAAAVGLKNVTTGDTLCDPNHIILLERMEFPEPVISVAIEPKTKGDQERMSIALGKLAREDPSFRVRTDEESGQTIIAGMGELHLDIIVDRMRREFKVEANVGAPQVAYRETIRRSIEQEGKFVRQSGGRGQYGHVWLKLEPQERGKGYEFVNKIVGGTVPKEFIPAVDKGIKEQTENGVIAGYPVVDIKATLYDGSYHDVDSSEMAFKIAGSMAFKEGVQKANPVLLEPIMKVEVVTPEEYMGDVMGDLNRRRGMVQGMEDSLSGKIIRAEVPLAEMFGYATDLRSATQGRANYTMEFSKYNEAPSNIAGAIIKKSQ</sequence>